<feature type="chain" id="PRO_0000136995" description="Nucleoside diphosphate kinase">
    <location>
        <begin position="1"/>
        <end position="141"/>
    </location>
</feature>
<feature type="active site" description="Pros-phosphohistidine intermediate" evidence="1">
    <location>
        <position position="117"/>
    </location>
</feature>
<feature type="binding site" evidence="1">
    <location>
        <position position="11"/>
    </location>
    <ligand>
        <name>ATP</name>
        <dbReference type="ChEBI" id="CHEBI:30616"/>
    </ligand>
</feature>
<feature type="binding site" evidence="1">
    <location>
        <position position="59"/>
    </location>
    <ligand>
        <name>ATP</name>
        <dbReference type="ChEBI" id="CHEBI:30616"/>
    </ligand>
</feature>
<feature type="binding site" evidence="1">
    <location>
        <position position="87"/>
    </location>
    <ligand>
        <name>ATP</name>
        <dbReference type="ChEBI" id="CHEBI:30616"/>
    </ligand>
</feature>
<feature type="binding site" evidence="1">
    <location>
        <position position="93"/>
    </location>
    <ligand>
        <name>ATP</name>
        <dbReference type="ChEBI" id="CHEBI:30616"/>
    </ligand>
</feature>
<feature type="binding site" evidence="1">
    <location>
        <position position="104"/>
    </location>
    <ligand>
        <name>ATP</name>
        <dbReference type="ChEBI" id="CHEBI:30616"/>
    </ligand>
</feature>
<feature type="binding site" evidence="1">
    <location>
        <position position="114"/>
    </location>
    <ligand>
        <name>ATP</name>
        <dbReference type="ChEBI" id="CHEBI:30616"/>
    </ligand>
</feature>
<keyword id="KW-0067">ATP-binding</keyword>
<keyword id="KW-0963">Cytoplasm</keyword>
<keyword id="KW-0418">Kinase</keyword>
<keyword id="KW-0460">Magnesium</keyword>
<keyword id="KW-0479">Metal-binding</keyword>
<keyword id="KW-0546">Nucleotide metabolism</keyword>
<keyword id="KW-0547">Nucleotide-binding</keyword>
<keyword id="KW-0597">Phosphoprotein</keyword>
<keyword id="KW-0808">Transferase</keyword>
<comment type="function">
    <text evidence="1">Major role in the synthesis of nucleoside triphosphates other than ATP. The ATP gamma phosphate is transferred to the NDP beta phosphate via a ping-pong mechanism, using a phosphorylated active-site intermediate.</text>
</comment>
<comment type="catalytic activity">
    <reaction evidence="1">
        <text>a 2'-deoxyribonucleoside 5'-diphosphate + ATP = a 2'-deoxyribonucleoside 5'-triphosphate + ADP</text>
        <dbReference type="Rhea" id="RHEA:44640"/>
        <dbReference type="ChEBI" id="CHEBI:30616"/>
        <dbReference type="ChEBI" id="CHEBI:61560"/>
        <dbReference type="ChEBI" id="CHEBI:73316"/>
        <dbReference type="ChEBI" id="CHEBI:456216"/>
        <dbReference type="EC" id="2.7.4.6"/>
    </reaction>
</comment>
<comment type="catalytic activity">
    <reaction evidence="1">
        <text>a ribonucleoside 5'-diphosphate + ATP = a ribonucleoside 5'-triphosphate + ADP</text>
        <dbReference type="Rhea" id="RHEA:18113"/>
        <dbReference type="ChEBI" id="CHEBI:30616"/>
        <dbReference type="ChEBI" id="CHEBI:57930"/>
        <dbReference type="ChEBI" id="CHEBI:61557"/>
        <dbReference type="ChEBI" id="CHEBI:456216"/>
        <dbReference type="EC" id="2.7.4.6"/>
    </reaction>
</comment>
<comment type="cofactor">
    <cofactor evidence="1">
        <name>Mg(2+)</name>
        <dbReference type="ChEBI" id="CHEBI:18420"/>
    </cofactor>
</comment>
<comment type="subunit">
    <text evidence="1">Homotetramer.</text>
</comment>
<comment type="subcellular location">
    <subcellularLocation>
        <location evidence="1">Cytoplasm</location>
    </subcellularLocation>
</comment>
<comment type="similarity">
    <text evidence="1">Belongs to the NDK family.</text>
</comment>
<proteinExistence type="inferred from homology"/>
<reference key="1">
    <citation type="journal article" date="2004" name="Nat. Genet.">
        <title>Evidence in the Legionella pneumophila genome for exploitation of host cell functions and high genome plasticity.</title>
        <authorList>
            <person name="Cazalet C."/>
            <person name="Rusniok C."/>
            <person name="Brueggemann H."/>
            <person name="Zidane N."/>
            <person name="Magnier A."/>
            <person name="Ma L."/>
            <person name="Tichit M."/>
            <person name="Jarraud S."/>
            <person name="Bouchier C."/>
            <person name="Vandenesch F."/>
            <person name="Kunst F."/>
            <person name="Etienne J."/>
            <person name="Glaser P."/>
            <person name="Buchrieser C."/>
        </authorList>
    </citation>
    <scope>NUCLEOTIDE SEQUENCE [LARGE SCALE GENOMIC DNA]</scope>
    <source>
        <strain>Paris</strain>
    </source>
</reference>
<accession>Q5X515</accession>
<dbReference type="EC" id="2.7.4.6" evidence="1"/>
<dbReference type="EMBL" id="CR628336">
    <property type="protein sequence ID" value="CAH12656.1"/>
    <property type="molecule type" value="Genomic_DNA"/>
</dbReference>
<dbReference type="RefSeq" id="WP_011213828.1">
    <property type="nucleotide sequence ID" value="NC_006368.1"/>
</dbReference>
<dbReference type="SMR" id="Q5X515"/>
<dbReference type="KEGG" id="lpp:lpp1505"/>
<dbReference type="LegioList" id="lpp1505"/>
<dbReference type="HOGENOM" id="CLU_060216_8_1_6"/>
<dbReference type="GO" id="GO:0005737">
    <property type="term" value="C:cytoplasm"/>
    <property type="evidence" value="ECO:0007669"/>
    <property type="project" value="UniProtKB-SubCell"/>
</dbReference>
<dbReference type="GO" id="GO:0005524">
    <property type="term" value="F:ATP binding"/>
    <property type="evidence" value="ECO:0007669"/>
    <property type="project" value="UniProtKB-UniRule"/>
</dbReference>
<dbReference type="GO" id="GO:0046872">
    <property type="term" value="F:metal ion binding"/>
    <property type="evidence" value="ECO:0007669"/>
    <property type="project" value="UniProtKB-KW"/>
</dbReference>
<dbReference type="GO" id="GO:0004550">
    <property type="term" value="F:nucleoside diphosphate kinase activity"/>
    <property type="evidence" value="ECO:0007669"/>
    <property type="project" value="UniProtKB-UniRule"/>
</dbReference>
<dbReference type="GO" id="GO:0006241">
    <property type="term" value="P:CTP biosynthetic process"/>
    <property type="evidence" value="ECO:0007669"/>
    <property type="project" value="UniProtKB-UniRule"/>
</dbReference>
<dbReference type="GO" id="GO:0006183">
    <property type="term" value="P:GTP biosynthetic process"/>
    <property type="evidence" value="ECO:0007669"/>
    <property type="project" value="UniProtKB-UniRule"/>
</dbReference>
<dbReference type="GO" id="GO:0006228">
    <property type="term" value="P:UTP biosynthetic process"/>
    <property type="evidence" value="ECO:0007669"/>
    <property type="project" value="UniProtKB-UniRule"/>
</dbReference>
<dbReference type="CDD" id="cd04413">
    <property type="entry name" value="NDPk_I"/>
    <property type="match status" value="1"/>
</dbReference>
<dbReference type="FunFam" id="3.30.70.141:FF:000001">
    <property type="entry name" value="Nucleoside diphosphate kinase"/>
    <property type="match status" value="1"/>
</dbReference>
<dbReference type="Gene3D" id="3.30.70.141">
    <property type="entry name" value="Nucleoside diphosphate kinase-like domain"/>
    <property type="match status" value="1"/>
</dbReference>
<dbReference type="HAMAP" id="MF_00451">
    <property type="entry name" value="NDP_kinase"/>
    <property type="match status" value="1"/>
</dbReference>
<dbReference type="InterPro" id="IPR034907">
    <property type="entry name" value="NDK-like_dom"/>
</dbReference>
<dbReference type="InterPro" id="IPR036850">
    <property type="entry name" value="NDK-like_dom_sf"/>
</dbReference>
<dbReference type="InterPro" id="IPR001564">
    <property type="entry name" value="Nucleoside_diP_kinase"/>
</dbReference>
<dbReference type="InterPro" id="IPR023005">
    <property type="entry name" value="Nucleoside_diP_kinase_AS"/>
</dbReference>
<dbReference type="NCBIfam" id="NF001908">
    <property type="entry name" value="PRK00668.1"/>
    <property type="match status" value="1"/>
</dbReference>
<dbReference type="PANTHER" id="PTHR46161">
    <property type="entry name" value="NUCLEOSIDE DIPHOSPHATE KINASE"/>
    <property type="match status" value="1"/>
</dbReference>
<dbReference type="PANTHER" id="PTHR46161:SF3">
    <property type="entry name" value="NUCLEOSIDE DIPHOSPHATE KINASE DDB_G0292928-RELATED"/>
    <property type="match status" value="1"/>
</dbReference>
<dbReference type="Pfam" id="PF00334">
    <property type="entry name" value="NDK"/>
    <property type="match status" value="1"/>
</dbReference>
<dbReference type="PRINTS" id="PR01243">
    <property type="entry name" value="NUCDPKINASE"/>
</dbReference>
<dbReference type="SMART" id="SM00562">
    <property type="entry name" value="NDK"/>
    <property type="match status" value="1"/>
</dbReference>
<dbReference type="SUPFAM" id="SSF54919">
    <property type="entry name" value="Nucleoside diphosphate kinase, NDK"/>
    <property type="match status" value="1"/>
</dbReference>
<dbReference type="PROSITE" id="PS00469">
    <property type="entry name" value="NDPK"/>
    <property type="match status" value="1"/>
</dbReference>
<dbReference type="PROSITE" id="PS51374">
    <property type="entry name" value="NDPK_LIKE"/>
    <property type="match status" value="1"/>
</dbReference>
<gene>
    <name evidence="1" type="primary">ndk</name>
    <name type="ordered locus">lpp1505</name>
</gene>
<organism>
    <name type="scientific">Legionella pneumophila (strain Paris)</name>
    <dbReference type="NCBI Taxonomy" id="297246"/>
    <lineage>
        <taxon>Bacteria</taxon>
        <taxon>Pseudomonadati</taxon>
        <taxon>Pseudomonadota</taxon>
        <taxon>Gammaproteobacteria</taxon>
        <taxon>Legionellales</taxon>
        <taxon>Legionellaceae</taxon>
        <taxon>Legionella</taxon>
    </lineage>
</organism>
<evidence type="ECO:0000255" key="1">
    <source>
        <dbReference type="HAMAP-Rule" id="MF_00451"/>
    </source>
</evidence>
<sequence length="141" mass="15557">MAKELTLSIIKPDAVAKSVIGEIYTRFEKAGLDIVAAKMIQLSREQAESFYDIHRARPFFKDLVDFMISGPVMIQVLKGDNAVAKNREIMGATNPKEAAPGTIRADFADSIDANAVHGSDSLENAAREIAFFFEPHELCNR</sequence>
<name>NDK_LEGPA</name>
<protein>
    <recommendedName>
        <fullName evidence="1">Nucleoside diphosphate kinase</fullName>
        <shortName evidence="1">NDK</shortName>
        <shortName evidence="1">NDP kinase</shortName>
        <ecNumber evidence="1">2.7.4.6</ecNumber>
    </recommendedName>
    <alternativeName>
        <fullName evidence="1">Nucleoside-2-P kinase</fullName>
    </alternativeName>
</protein>